<dbReference type="EC" id="1.1.1.267" evidence="1"/>
<dbReference type="EMBL" id="AL646052">
    <property type="protein sequence ID" value="CAD15112.1"/>
    <property type="molecule type" value="Genomic_DNA"/>
</dbReference>
<dbReference type="RefSeq" id="WP_011001359.1">
    <property type="nucleotide sequence ID" value="NC_003295.1"/>
</dbReference>
<dbReference type="SMR" id="Q8XZI5"/>
<dbReference type="STRING" id="267608.RSc1410"/>
<dbReference type="EnsemblBacteria" id="CAD15112">
    <property type="protein sequence ID" value="CAD15112"/>
    <property type="gene ID" value="RSc1410"/>
</dbReference>
<dbReference type="KEGG" id="rso:RSc1410"/>
<dbReference type="PATRIC" id="fig|267608.8.peg.1441"/>
<dbReference type="eggNOG" id="COG0743">
    <property type="taxonomic scope" value="Bacteria"/>
</dbReference>
<dbReference type="HOGENOM" id="CLU_035714_4_0_4"/>
<dbReference type="UniPathway" id="UPA00056">
    <property type="reaction ID" value="UER00092"/>
</dbReference>
<dbReference type="Proteomes" id="UP000001436">
    <property type="component" value="Chromosome"/>
</dbReference>
<dbReference type="GO" id="GO:0030604">
    <property type="term" value="F:1-deoxy-D-xylulose-5-phosphate reductoisomerase activity"/>
    <property type="evidence" value="ECO:0007669"/>
    <property type="project" value="UniProtKB-UniRule"/>
</dbReference>
<dbReference type="GO" id="GO:0030145">
    <property type="term" value="F:manganese ion binding"/>
    <property type="evidence" value="ECO:0007669"/>
    <property type="project" value="TreeGrafter"/>
</dbReference>
<dbReference type="GO" id="GO:0070402">
    <property type="term" value="F:NADPH binding"/>
    <property type="evidence" value="ECO:0007669"/>
    <property type="project" value="InterPro"/>
</dbReference>
<dbReference type="GO" id="GO:0051484">
    <property type="term" value="P:isopentenyl diphosphate biosynthetic process, methylerythritol 4-phosphate pathway involved in terpenoid biosynthetic process"/>
    <property type="evidence" value="ECO:0007669"/>
    <property type="project" value="TreeGrafter"/>
</dbReference>
<dbReference type="FunFam" id="3.40.50.720:FF:000045">
    <property type="entry name" value="1-deoxy-D-xylulose 5-phosphate reductoisomerase"/>
    <property type="match status" value="1"/>
</dbReference>
<dbReference type="Gene3D" id="1.10.1740.10">
    <property type="match status" value="1"/>
</dbReference>
<dbReference type="Gene3D" id="3.40.50.720">
    <property type="entry name" value="NAD(P)-binding Rossmann-like Domain"/>
    <property type="match status" value="1"/>
</dbReference>
<dbReference type="HAMAP" id="MF_00183">
    <property type="entry name" value="DXP_reductoisom"/>
    <property type="match status" value="1"/>
</dbReference>
<dbReference type="InterPro" id="IPR003821">
    <property type="entry name" value="DXP_reductoisomerase"/>
</dbReference>
<dbReference type="InterPro" id="IPR013644">
    <property type="entry name" value="DXP_reductoisomerase_C"/>
</dbReference>
<dbReference type="InterPro" id="IPR013512">
    <property type="entry name" value="DXP_reductoisomerase_N"/>
</dbReference>
<dbReference type="InterPro" id="IPR026877">
    <property type="entry name" value="DXPR_C"/>
</dbReference>
<dbReference type="InterPro" id="IPR036169">
    <property type="entry name" value="DXPR_C_sf"/>
</dbReference>
<dbReference type="InterPro" id="IPR036291">
    <property type="entry name" value="NAD(P)-bd_dom_sf"/>
</dbReference>
<dbReference type="NCBIfam" id="TIGR00243">
    <property type="entry name" value="Dxr"/>
    <property type="match status" value="1"/>
</dbReference>
<dbReference type="NCBIfam" id="NF003938">
    <property type="entry name" value="PRK05447.1-1"/>
    <property type="match status" value="1"/>
</dbReference>
<dbReference type="NCBIfam" id="NF009114">
    <property type="entry name" value="PRK12464.1"/>
    <property type="match status" value="1"/>
</dbReference>
<dbReference type="PANTHER" id="PTHR30525">
    <property type="entry name" value="1-DEOXY-D-XYLULOSE 5-PHOSPHATE REDUCTOISOMERASE"/>
    <property type="match status" value="1"/>
</dbReference>
<dbReference type="PANTHER" id="PTHR30525:SF0">
    <property type="entry name" value="1-DEOXY-D-XYLULOSE 5-PHOSPHATE REDUCTOISOMERASE, CHLOROPLASTIC"/>
    <property type="match status" value="1"/>
</dbReference>
<dbReference type="Pfam" id="PF08436">
    <property type="entry name" value="DXP_redisom_C"/>
    <property type="match status" value="1"/>
</dbReference>
<dbReference type="Pfam" id="PF02670">
    <property type="entry name" value="DXP_reductoisom"/>
    <property type="match status" value="1"/>
</dbReference>
<dbReference type="Pfam" id="PF13288">
    <property type="entry name" value="DXPR_C"/>
    <property type="match status" value="1"/>
</dbReference>
<dbReference type="PIRSF" id="PIRSF006205">
    <property type="entry name" value="Dxp_reductismrs"/>
    <property type="match status" value="1"/>
</dbReference>
<dbReference type="SUPFAM" id="SSF69055">
    <property type="entry name" value="1-deoxy-D-xylulose-5-phosphate reductoisomerase, C-terminal domain"/>
    <property type="match status" value="1"/>
</dbReference>
<dbReference type="SUPFAM" id="SSF55347">
    <property type="entry name" value="Glyceraldehyde-3-phosphate dehydrogenase-like, C-terminal domain"/>
    <property type="match status" value="1"/>
</dbReference>
<dbReference type="SUPFAM" id="SSF51735">
    <property type="entry name" value="NAD(P)-binding Rossmann-fold domains"/>
    <property type="match status" value="1"/>
</dbReference>
<protein>
    <recommendedName>
        <fullName evidence="1">1-deoxy-D-xylulose 5-phosphate reductoisomerase</fullName>
        <shortName evidence="1">DXP reductoisomerase</shortName>
        <ecNumber evidence="1">1.1.1.267</ecNumber>
    </recommendedName>
    <alternativeName>
        <fullName evidence="1">1-deoxyxylulose-5-phosphate reductoisomerase</fullName>
    </alternativeName>
    <alternativeName>
        <fullName evidence="1">2-C-methyl-D-erythritol 4-phosphate synthase</fullName>
    </alternativeName>
</protein>
<proteinExistence type="inferred from homology"/>
<organism>
    <name type="scientific">Ralstonia nicotianae (strain ATCC BAA-1114 / GMI1000)</name>
    <name type="common">Ralstonia solanacearum</name>
    <dbReference type="NCBI Taxonomy" id="267608"/>
    <lineage>
        <taxon>Bacteria</taxon>
        <taxon>Pseudomonadati</taxon>
        <taxon>Pseudomonadota</taxon>
        <taxon>Betaproteobacteria</taxon>
        <taxon>Burkholderiales</taxon>
        <taxon>Burkholderiaceae</taxon>
        <taxon>Ralstonia</taxon>
        <taxon>Ralstonia solanacearum species complex</taxon>
    </lineage>
</organism>
<reference key="1">
    <citation type="journal article" date="2002" name="Nature">
        <title>Genome sequence of the plant pathogen Ralstonia solanacearum.</title>
        <authorList>
            <person name="Salanoubat M."/>
            <person name="Genin S."/>
            <person name="Artiguenave F."/>
            <person name="Gouzy J."/>
            <person name="Mangenot S."/>
            <person name="Arlat M."/>
            <person name="Billault A."/>
            <person name="Brottier P."/>
            <person name="Camus J.-C."/>
            <person name="Cattolico L."/>
            <person name="Chandler M."/>
            <person name="Choisne N."/>
            <person name="Claudel-Renard C."/>
            <person name="Cunnac S."/>
            <person name="Demange N."/>
            <person name="Gaspin C."/>
            <person name="Lavie M."/>
            <person name="Moisan A."/>
            <person name="Robert C."/>
            <person name="Saurin W."/>
            <person name="Schiex T."/>
            <person name="Siguier P."/>
            <person name="Thebault P."/>
            <person name="Whalen M."/>
            <person name="Wincker P."/>
            <person name="Levy M."/>
            <person name="Weissenbach J."/>
            <person name="Boucher C.A."/>
        </authorList>
    </citation>
    <scope>NUCLEOTIDE SEQUENCE [LARGE SCALE GENOMIC DNA]</scope>
    <source>
        <strain>ATCC BAA-1114 / GMI1000</strain>
    </source>
</reference>
<name>DXR_RALN1</name>
<comment type="function">
    <text evidence="1">Catalyzes the NADPH-dependent rearrangement and reduction of 1-deoxy-D-xylulose-5-phosphate (DXP) to 2-C-methyl-D-erythritol 4-phosphate (MEP).</text>
</comment>
<comment type="catalytic activity">
    <reaction evidence="1">
        <text>2-C-methyl-D-erythritol 4-phosphate + NADP(+) = 1-deoxy-D-xylulose 5-phosphate + NADPH + H(+)</text>
        <dbReference type="Rhea" id="RHEA:13717"/>
        <dbReference type="ChEBI" id="CHEBI:15378"/>
        <dbReference type="ChEBI" id="CHEBI:57783"/>
        <dbReference type="ChEBI" id="CHEBI:57792"/>
        <dbReference type="ChEBI" id="CHEBI:58262"/>
        <dbReference type="ChEBI" id="CHEBI:58349"/>
        <dbReference type="EC" id="1.1.1.267"/>
    </reaction>
    <physiologicalReaction direction="right-to-left" evidence="1">
        <dbReference type="Rhea" id="RHEA:13719"/>
    </physiologicalReaction>
</comment>
<comment type="cofactor">
    <cofactor evidence="1">
        <name>Mg(2+)</name>
        <dbReference type="ChEBI" id="CHEBI:18420"/>
    </cofactor>
    <cofactor evidence="1">
        <name>Mn(2+)</name>
        <dbReference type="ChEBI" id="CHEBI:29035"/>
    </cofactor>
</comment>
<comment type="pathway">
    <text evidence="1">Isoprenoid biosynthesis; isopentenyl diphosphate biosynthesis via DXP pathway; isopentenyl diphosphate from 1-deoxy-D-xylulose 5-phosphate: step 1/6.</text>
</comment>
<comment type="similarity">
    <text evidence="1">Belongs to the DXR family.</text>
</comment>
<sequence>MMRITVLGATGSIGDSTLDVVRRHPDRYRVFALTANTQVDKLAALCRVFRPAMAVVGSATAAEVLRDQLGAEATGIDIRFGPEALEEAAAHPDCDAVMAAIVGAAGLRPTLAAVRAGKRVLLANKEALVMSGALFMDAVRQHGATVLPIDSEHNAIFQCLPQQRPSFGHGVARIVLTASGGPFRTRAVETLAEVTPDQACAHPNWVMGRKISVDSATMMNKGLEVIEAHWLFNVPVERLEVLIHPQSVIHSMVAYDDGSVLAQLGNPDMRTPIAYGLAYPERIEAGVPLLDLAATGTLAFEAPDLHRFPCLALAFDALRAGGTAPAVLNAANEVAVEAFLQRRIRFTEIAAVVGDTLARTAIGPADSLDTVFAADAQARRRAEHYIAASCLQS</sequence>
<gene>
    <name evidence="1" type="primary">dxr</name>
    <name type="ordered locus">RSc1410</name>
    <name type="ORF">RS05282</name>
</gene>
<feature type="chain" id="PRO_0000163703" description="1-deoxy-D-xylulose 5-phosphate reductoisomerase">
    <location>
        <begin position="1"/>
        <end position="393"/>
    </location>
</feature>
<feature type="binding site" evidence="1">
    <location>
        <position position="10"/>
    </location>
    <ligand>
        <name>NADPH</name>
        <dbReference type="ChEBI" id="CHEBI:57783"/>
    </ligand>
</feature>
<feature type="binding site" evidence="1">
    <location>
        <position position="11"/>
    </location>
    <ligand>
        <name>NADPH</name>
        <dbReference type="ChEBI" id="CHEBI:57783"/>
    </ligand>
</feature>
<feature type="binding site" evidence="1">
    <location>
        <position position="12"/>
    </location>
    <ligand>
        <name>NADPH</name>
        <dbReference type="ChEBI" id="CHEBI:57783"/>
    </ligand>
</feature>
<feature type="binding site" evidence="1">
    <location>
        <position position="13"/>
    </location>
    <ligand>
        <name>NADPH</name>
        <dbReference type="ChEBI" id="CHEBI:57783"/>
    </ligand>
</feature>
<feature type="binding site" evidence="1">
    <location>
        <position position="38"/>
    </location>
    <ligand>
        <name>NADPH</name>
        <dbReference type="ChEBI" id="CHEBI:57783"/>
    </ligand>
</feature>
<feature type="binding site" evidence="1">
    <location>
        <position position="124"/>
    </location>
    <ligand>
        <name>NADPH</name>
        <dbReference type="ChEBI" id="CHEBI:57783"/>
    </ligand>
</feature>
<feature type="binding site" evidence="1">
    <location>
        <position position="125"/>
    </location>
    <ligand>
        <name>1-deoxy-D-xylulose 5-phosphate</name>
        <dbReference type="ChEBI" id="CHEBI:57792"/>
    </ligand>
</feature>
<feature type="binding site" evidence="1">
    <location>
        <position position="126"/>
    </location>
    <ligand>
        <name>NADPH</name>
        <dbReference type="ChEBI" id="CHEBI:57783"/>
    </ligand>
</feature>
<feature type="binding site" evidence="1">
    <location>
        <position position="150"/>
    </location>
    <ligand>
        <name>Mn(2+)</name>
        <dbReference type="ChEBI" id="CHEBI:29035"/>
    </ligand>
</feature>
<feature type="binding site" evidence="1">
    <location>
        <position position="151"/>
    </location>
    <ligand>
        <name>1-deoxy-D-xylulose 5-phosphate</name>
        <dbReference type="ChEBI" id="CHEBI:57792"/>
    </ligand>
</feature>
<feature type="binding site" evidence="1">
    <location>
        <position position="152"/>
    </location>
    <ligand>
        <name>1-deoxy-D-xylulose 5-phosphate</name>
        <dbReference type="ChEBI" id="CHEBI:57792"/>
    </ligand>
</feature>
<feature type="binding site" evidence="1">
    <location>
        <position position="152"/>
    </location>
    <ligand>
        <name>Mn(2+)</name>
        <dbReference type="ChEBI" id="CHEBI:29035"/>
    </ligand>
</feature>
<feature type="binding site" evidence="1">
    <location>
        <position position="179"/>
    </location>
    <ligand>
        <name>1-deoxy-D-xylulose 5-phosphate</name>
        <dbReference type="ChEBI" id="CHEBI:57792"/>
    </ligand>
</feature>
<feature type="binding site" evidence="1">
    <location>
        <position position="202"/>
    </location>
    <ligand>
        <name>1-deoxy-D-xylulose 5-phosphate</name>
        <dbReference type="ChEBI" id="CHEBI:57792"/>
    </ligand>
</feature>
<feature type="binding site" evidence="1">
    <location>
        <position position="208"/>
    </location>
    <ligand>
        <name>NADPH</name>
        <dbReference type="ChEBI" id="CHEBI:57783"/>
    </ligand>
</feature>
<feature type="binding site" evidence="1">
    <location>
        <position position="215"/>
    </location>
    <ligand>
        <name>1-deoxy-D-xylulose 5-phosphate</name>
        <dbReference type="ChEBI" id="CHEBI:57792"/>
    </ligand>
</feature>
<feature type="binding site" evidence="1">
    <location>
        <position position="220"/>
    </location>
    <ligand>
        <name>1-deoxy-D-xylulose 5-phosphate</name>
        <dbReference type="ChEBI" id="CHEBI:57792"/>
    </ligand>
</feature>
<feature type="binding site" evidence="1">
    <location>
        <position position="221"/>
    </location>
    <ligand>
        <name>1-deoxy-D-xylulose 5-phosphate</name>
        <dbReference type="ChEBI" id="CHEBI:57792"/>
    </ligand>
</feature>
<feature type="binding site" evidence="1">
    <location>
        <position position="224"/>
    </location>
    <ligand>
        <name>1-deoxy-D-xylulose 5-phosphate</name>
        <dbReference type="ChEBI" id="CHEBI:57792"/>
    </ligand>
</feature>
<feature type="binding site" evidence="1">
    <location>
        <position position="224"/>
    </location>
    <ligand>
        <name>Mn(2+)</name>
        <dbReference type="ChEBI" id="CHEBI:29035"/>
    </ligand>
</feature>
<accession>Q8XZI5</accession>
<evidence type="ECO:0000255" key="1">
    <source>
        <dbReference type="HAMAP-Rule" id="MF_00183"/>
    </source>
</evidence>
<keyword id="KW-0414">Isoprene biosynthesis</keyword>
<keyword id="KW-0464">Manganese</keyword>
<keyword id="KW-0479">Metal-binding</keyword>
<keyword id="KW-0521">NADP</keyword>
<keyword id="KW-0560">Oxidoreductase</keyword>
<keyword id="KW-1185">Reference proteome</keyword>